<name>IF2_PROVU</name>
<protein>
    <recommendedName>
        <fullName>Translation initiation factor IF-2</fullName>
    </recommendedName>
</protein>
<dbReference type="EMBL" id="AJ002737">
    <property type="protein sequence ID" value="CAA05708.1"/>
    <property type="molecule type" value="Genomic_DNA"/>
</dbReference>
<dbReference type="EMBL" id="AJ002737">
    <property type="protein sequence ID" value="CAA05709.1"/>
    <property type="molecule type" value="Genomic_DNA"/>
</dbReference>
<dbReference type="SMR" id="Q9ZF22"/>
<dbReference type="STRING" id="585.DR95_3254"/>
<dbReference type="eggNOG" id="COG0532">
    <property type="taxonomic scope" value="Bacteria"/>
</dbReference>
<dbReference type="GO" id="GO:0005829">
    <property type="term" value="C:cytosol"/>
    <property type="evidence" value="ECO:0007669"/>
    <property type="project" value="TreeGrafter"/>
</dbReference>
<dbReference type="GO" id="GO:0005525">
    <property type="term" value="F:GTP binding"/>
    <property type="evidence" value="ECO:0007669"/>
    <property type="project" value="UniProtKB-KW"/>
</dbReference>
<dbReference type="GO" id="GO:0003924">
    <property type="term" value="F:GTPase activity"/>
    <property type="evidence" value="ECO:0007669"/>
    <property type="project" value="UniProtKB-UniRule"/>
</dbReference>
<dbReference type="GO" id="GO:0097216">
    <property type="term" value="F:guanosine tetraphosphate binding"/>
    <property type="evidence" value="ECO:0007669"/>
    <property type="project" value="UniProtKB-ARBA"/>
</dbReference>
<dbReference type="GO" id="GO:0003743">
    <property type="term" value="F:translation initiation factor activity"/>
    <property type="evidence" value="ECO:0007669"/>
    <property type="project" value="UniProtKB-UniRule"/>
</dbReference>
<dbReference type="CDD" id="cd01887">
    <property type="entry name" value="IF2_eIF5B"/>
    <property type="match status" value="1"/>
</dbReference>
<dbReference type="CDD" id="cd03702">
    <property type="entry name" value="IF2_mtIF2_II"/>
    <property type="match status" value="1"/>
</dbReference>
<dbReference type="CDD" id="cd03692">
    <property type="entry name" value="mtIF2_IVc"/>
    <property type="match status" value="1"/>
</dbReference>
<dbReference type="CDD" id="cd22249">
    <property type="entry name" value="UDM1_RNF168_RNF169-like"/>
    <property type="match status" value="1"/>
</dbReference>
<dbReference type="FunFam" id="2.40.30.10:FF:000007">
    <property type="entry name" value="Translation initiation factor IF-2"/>
    <property type="match status" value="1"/>
</dbReference>
<dbReference type="FunFam" id="2.40.30.10:FF:000008">
    <property type="entry name" value="Translation initiation factor IF-2"/>
    <property type="match status" value="1"/>
</dbReference>
<dbReference type="FunFam" id="3.40.50.10050:FF:000001">
    <property type="entry name" value="Translation initiation factor IF-2"/>
    <property type="match status" value="1"/>
</dbReference>
<dbReference type="FunFam" id="3.40.50.300:FF:000019">
    <property type="entry name" value="Translation initiation factor IF-2"/>
    <property type="match status" value="1"/>
</dbReference>
<dbReference type="Gene3D" id="3.40.50.300">
    <property type="entry name" value="P-loop containing nucleotide triphosphate hydrolases"/>
    <property type="match status" value="1"/>
</dbReference>
<dbReference type="Gene3D" id="3.30.56.50">
    <property type="entry name" value="Putative DNA-binding domain, N-terminal subdomain of bacterial translation initiation factor IF2"/>
    <property type="match status" value="1"/>
</dbReference>
<dbReference type="Gene3D" id="2.40.30.10">
    <property type="entry name" value="Translation factors"/>
    <property type="match status" value="2"/>
</dbReference>
<dbReference type="Gene3D" id="3.40.50.10050">
    <property type="entry name" value="Translation initiation factor IF- 2, domain 3"/>
    <property type="match status" value="1"/>
</dbReference>
<dbReference type="HAMAP" id="MF_00100_B">
    <property type="entry name" value="IF_2_B"/>
    <property type="match status" value="1"/>
</dbReference>
<dbReference type="InterPro" id="IPR009061">
    <property type="entry name" value="DNA-bd_dom_put_sf"/>
</dbReference>
<dbReference type="InterPro" id="IPR053905">
    <property type="entry name" value="EF-G-like_DII"/>
</dbReference>
<dbReference type="InterPro" id="IPR004161">
    <property type="entry name" value="EFTu-like_2"/>
</dbReference>
<dbReference type="InterPro" id="IPR013575">
    <property type="entry name" value="IF2_assoc_dom_bac"/>
</dbReference>
<dbReference type="InterPro" id="IPR044145">
    <property type="entry name" value="IF2_II"/>
</dbReference>
<dbReference type="InterPro" id="IPR006847">
    <property type="entry name" value="IF2_N"/>
</dbReference>
<dbReference type="InterPro" id="IPR027417">
    <property type="entry name" value="P-loop_NTPase"/>
</dbReference>
<dbReference type="InterPro" id="IPR005225">
    <property type="entry name" value="Small_GTP-bd"/>
</dbReference>
<dbReference type="InterPro" id="IPR000795">
    <property type="entry name" value="T_Tr_GTP-bd_dom"/>
</dbReference>
<dbReference type="InterPro" id="IPR000178">
    <property type="entry name" value="TF_IF2_bacterial-like"/>
</dbReference>
<dbReference type="InterPro" id="IPR015760">
    <property type="entry name" value="TIF_IF2"/>
</dbReference>
<dbReference type="InterPro" id="IPR023115">
    <property type="entry name" value="TIF_IF2_dom3"/>
</dbReference>
<dbReference type="InterPro" id="IPR036925">
    <property type="entry name" value="TIF_IF2_dom3_sf"/>
</dbReference>
<dbReference type="InterPro" id="IPR009000">
    <property type="entry name" value="Transl_B-barrel_sf"/>
</dbReference>
<dbReference type="NCBIfam" id="TIGR00487">
    <property type="entry name" value="IF-2"/>
    <property type="match status" value="1"/>
</dbReference>
<dbReference type="NCBIfam" id="TIGR00231">
    <property type="entry name" value="small_GTP"/>
    <property type="match status" value="1"/>
</dbReference>
<dbReference type="PANTHER" id="PTHR43381:SF5">
    <property type="entry name" value="TR-TYPE G DOMAIN-CONTAINING PROTEIN"/>
    <property type="match status" value="1"/>
</dbReference>
<dbReference type="PANTHER" id="PTHR43381">
    <property type="entry name" value="TRANSLATION INITIATION FACTOR IF-2-RELATED"/>
    <property type="match status" value="1"/>
</dbReference>
<dbReference type="Pfam" id="PF22042">
    <property type="entry name" value="EF-G_D2"/>
    <property type="match status" value="1"/>
</dbReference>
<dbReference type="Pfam" id="PF00009">
    <property type="entry name" value="GTP_EFTU"/>
    <property type="match status" value="1"/>
</dbReference>
<dbReference type="Pfam" id="PF03144">
    <property type="entry name" value="GTP_EFTU_D2"/>
    <property type="match status" value="1"/>
</dbReference>
<dbReference type="Pfam" id="PF11987">
    <property type="entry name" value="IF-2"/>
    <property type="match status" value="1"/>
</dbReference>
<dbReference type="Pfam" id="PF08364">
    <property type="entry name" value="IF2_assoc"/>
    <property type="match status" value="1"/>
</dbReference>
<dbReference type="Pfam" id="PF04760">
    <property type="entry name" value="IF2_N"/>
    <property type="match status" value="2"/>
</dbReference>
<dbReference type="SUPFAM" id="SSF52156">
    <property type="entry name" value="Initiation factor IF2/eIF5b, domain 3"/>
    <property type="match status" value="1"/>
</dbReference>
<dbReference type="SUPFAM" id="SSF52540">
    <property type="entry name" value="P-loop containing nucleoside triphosphate hydrolases"/>
    <property type="match status" value="1"/>
</dbReference>
<dbReference type="SUPFAM" id="SSF46955">
    <property type="entry name" value="Putative DNA-binding domain"/>
    <property type="match status" value="1"/>
</dbReference>
<dbReference type="SUPFAM" id="SSF50447">
    <property type="entry name" value="Translation proteins"/>
    <property type="match status" value="2"/>
</dbReference>
<dbReference type="PROSITE" id="PS51722">
    <property type="entry name" value="G_TR_2"/>
    <property type="match status" value="1"/>
</dbReference>
<dbReference type="PROSITE" id="PS01176">
    <property type="entry name" value="IF2"/>
    <property type="match status" value="1"/>
</dbReference>
<evidence type="ECO:0000250" key="1"/>
<evidence type="ECO:0000256" key="2">
    <source>
        <dbReference type="SAM" id="MobiDB-lite"/>
    </source>
</evidence>
<evidence type="ECO:0000305" key="3"/>
<organism>
    <name type="scientific">Proteus vulgaris</name>
    <dbReference type="NCBI Taxonomy" id="585"/>
    <lineage>
        <taxon>Bacteria</taxon>
        <taxon>Pseudomonadati</taxon>
        <taxon>Pseudomonadota</taxon>
        <taxon>Gammaproteobacteria</taxon>
        <taxon>Enterobacterales</taxon>
        <taxon>Morganellaceae</taxon>
        <taxon>Proteus</taxon>
    </lineage>
</organism>
<keyword id="KW-0024">Alternative initiation</keyword>
<keyword id="KW-0963">Cytoplasm</keyword>
<keyword id="KW-0342">GTP-binding</keyword>
<keyword id="KW-0396">Initiation factor</keyword>
<keyword id="KW-0547">Nucleotide-binding</keyword>
<keyword id="KW-0648">Protein biosynthesis</keyword>
<accession>Q9ZF22</accession>
<reference key="1">
    <citation type="submission" date="1997-11" db="EMBL/GenBank/DDBJ databases">
        <title>Sequence of the infB gene from Proteus vulgaris.</title>
        <authorList>
            <person name="Steffensen S.A.D.A."/>
            <person name="Soballe B."/>
            <person name="Kristensen T."/>
            <person name="Mortensen K.K."/>
            <person name="Sperling-Petersen H.U."/>
        </authorList>
    </citation>
    <scope>NUCLEOTIDE SEQUENCE [GENOMIC DNA]</scope>
    <source>
        <strain>PvuAU9201</strain>
    </source>
</reference>
<feature type="chain" id="PRO_0000014472" description="Translation initiation factor IF-2">
    <location>
        <begin position="1"/>
        <end position="917"/>
    </location>
</feature>
<feature type="domain" description="tr-type G">
    <location>
        <begin position="416"/>
        <end position="585"/>
    </location>
</feature>
<feature type="region of interest" description="Disordered" evidence="2">
    <location>
        <begin position="102"/>
        <end position="326"/>
    </location>
</feature>
<feature type="region of interest" description="G1" evidence="1">
    <location>
        <begin position="425"/>
        <end position="432"/>
    </location>
</feature>
<feature type="region of interest" description="G2" evidence="1">
    <location>
        <begin position="450"/>
        <end position="454"/>
    </location>
</feature>
<feature type="region of interest" description="G3" evidence="1">
    <location>
        <begin position="471"/>
        <end position="474"/>
    </location>
</feature>
<feature type="region of interest" description="G4" evidence="1">
    <location>
        <begin position="525"/>
        <end position="528"/>
    </location>
</feature>
<feature type="region of interest" description="G5" evidence="1">
    <location>
        <begin position="561"/>
        <end position="563"/>
    </location>
</feature>
<feature type="compositionally biased region" description="Basic and acidic residues" evidence="2">
    <location>
        <begin position="102"/>
        <end position="249"/>
    </location>
</feature>
<feature type="compositionally biased region" description="Basic residues" evidence="2">
    <location>
        <begin position="279"/>
        <end position="293"/>
    </location>
</feature>
<feature type="compositionally biased region" description="Basic and acidic residues" evidence="2">
    <location>
        <begin position="294"/>
        <end position="306"/>
    </location>
</feature>
<feature type="binding site" evidence="1">
    <location>
        <begin position="425"/>
        <end position="432"/>
    </location>
    <ligand>
        <name>GTP</name>
        <dbReference type="ChEBI" id="CHEBI:37565"/>
    </ligand>
</feature>
<feature type="binding site" evidence="1">
    <location>
        <begin position="471"/>
        <end position="475"/>
    </location>
    <ligand>
        <name>GTP</name>
        <dbReference type="ChEBI" id="CHEBI:37565"/>
    </ligand>
</feature>
<feature type="binding site" evidence="1">
    <location>
        <begin position="525"/>
        <end position="528"/>
    </location>
    <ligand>
        <name>GTP</name>
        <dbReference type="ChEBI" id="CHEBI:37565"/>
    </ligand>
</feature>
<feature type="splice variant" id="VSP_018764" description="In isoform Beta." evidence="3">
    <location>
        <begin position="1"/>
        <end position="181"/>
    </location>
</feature>
<feature type="splice variant" id="VSP_018765" description="In isoform Beta." evidence="3">
    <original>V</original>
    <variation>M</variation>
    <location>
        <position position="182"/>
    </location>
</feature>
<sequence>MTDETVKSLAEEIQTPVERLVQQFADAGIEKTVSDSVSQKEKETLLAWLNRDKDISTGQPSKLTLQRKVRSTLSVPGTGGKSKSVAIEVRKKRTYVNRDVIEKSQAEEQALREAEEKAHREVEEKAQREAQEKAQRAAEEKAKREAQEAKKQAEEKAKREAEEAKREAAELAKREAAEKNKVKQNDKPKADVADQDKARRNAELAELKRKTEEAQRLKVEEETRAAAEKARRLAEENAEKWTAEPKAPETESADYHVTTSRYARDAEDESDAEVEGDRRRGRTAKAPRAKKNNRHSEKADREEARAAGRSNKKGKRKSSTLQQGFHKPAVAVNRDVIIGETISVAELANKMAVKGSEVIKTMMKMGAMATINQVLDQETAQLVAEEMGHKVILRRENELEEQVMNDRDTGEESEVSRAPVVTIMGHVDHGKTSLLDYIRSTKVASGEAGGITQHIGAYHVKTDKGEITFLDTPGHAAFTSMRARGAQVTDIVVLVVAADDGVMPQTIEAIQHAKAANVPVVVAVNKIDKHEADPDRVKTELSQYGILSEDWGGETQFMHVSAKQGLGIDELLDAILLQAEVLELKAVKEGMASGVVIESYLDKGRGPVATILVREGTLNKGDIVLCGFEYGRIRAMRNELGQEVQSAGPSMPVEILGLSNVPSAGDEATVVRDEKKAREVALYRQGKFREVKLARQQKSKLENMFANMEEGKVSELNIVLKTDVQGTCEAITDALVKLSTDEVKLRIIGSGVGGITETDATLAAASEAIILGFNVRADASARRIIEQESVDLRYYSVIYSLIDEIKLAMSGMLAPEYKQEIMGLAEVRDVFKSPKFGAVAGCMVVEGNIKRNNPIRVLRDNVVIYEGELESLRRFKDDVNEVRNGMECGIGVKNYNDVRVGDMIEVFQVIEIKRSIA</sequence>
<comment type="function">
    <text evidence="1">One of the essential components for the initiation of protein synthesis. Protects formylmethionyl-tRNA from spontaneous hydrolysis and promotes its binding to the 30S ribosomal subunits. Also involved in the hydrolysis of GTP during the formation of the 70S ribosomal complex (By similarity).</text>
</comment>
<comment type="subcellular location">
    <subcellularLocation>
        <location evidence="1">Cytoplasm</location>
    </subcellularLocation>
</comment>
<comment type="alternative products">
    <event type="alternative initiation"/>
    <isoform>
        <id>Q9ZF22-1</id>
        <name>Alpha</name>
        <sequence type="displayed"/>
    </isoform>
    <isoform>
        <id>Q9ZF22-2</id>
        <name>Beta</name>
        <sequence type="described" ref="VSP_018764 VSP_018765"/>
    </isoform>
</comment>
<comment type="similarity">
    <text evidence="3">Belongs to the TRAFAC class translation factor GTPase superfamily. Classic translation factor GTPase family. IF-2 subfamily.</text>
</comment>
<proteinExistence type="inferred from homology"/>
<gene>
    <name type="primary">infB</name>
</gene>